<sequence>MARSSGPLCLLLLGGLVAGILSGASADGNGLPSKKLKMQYTAGPLLKFQICVSUGYRRVFEDYMRVISQRYPDIRIEGENYLPHPIYRNIASFLSVFKLVLIGLIIAGKDPFAFFGMQAPSVWQWGQENKVYACMMVFFVSNMIENQCMSTGAFEITLNDVPVWSKLESGHLPSVQQLVQIIDNEMKLNVHMDAIPHHHRS</sequence>
<evidence type="ECO:0000250" key="1"/>
<evidence type="ECO:0000250" key="2">
    <source>
        <dbReference type="UniProtKB" id="P62341"/>
    </source>
</evidence>
<evidence type="ECO:0000250" key="3">
    <source>
        <dbReference type="UniProtKB" id="Q1H5H1"/>
    </source>
</evidence>
<evidence type="ECO:0000255" key="4"/>
<evidence type="ECO:0000305" key="5"/>
<evidence type="ECO:0000312" key="6">
    <source>
        <dbReference type="EMBL" id="AAH59764.1"/>
    </source>
</evidence>
<evidence type="ECO:0000312" key="7">
    <source>
        <dbReference type="EMBL" id="CAJ82619.1"/>
    </source>
</evidence>
<evidence type="ECO:0000312" key="8">
    <source>
        <dbReference type="EMBL" id="CAJ82896.1"/>
    </source>
</evidence>
<name>SELT_XENTR</name>
<protein>
    <recommendedName>
        <fullName evidence="5">Thioredoxin reductase-like selenoprotein T</fullName>
        <shortName evidence="2">SelT</shortName>
        <ecNumber evidence="3">1.8.1.9</ecNumber>
    </recommendedName>
</protein>
<proteinExistence type="evidence at transcript level"/>
<comment type="function">
    <text evidence="3">Selenoprotein with thioredoxin reductase-like oxidoreductase activity.</text>
</comment>
<comment type="catalytic activity">
    <reaction evidence="3">
        <text>[thioredoxin]-dithiol + NADP(+) = [thioredoxin]-disulfide + NADPH + H(+)</text>
        <dbReference type="Rhea" id="RHEA:20345"/>
        <dbReference type="Rhea" id="RHEA-COMP:10698"/>
        <dbReference type="Rhea" id="RHEA-COMP:10700"/>
        <dbReference type="ChEBI" id="CHEBI:15378"/>
        <dbReference type="ChEBI" id="CHEBI:29950"/>
        <dbReference type="ChEBI" id="CHEBI:50058"/>
        <dbReference type="ChEBI" id="CHEBI:57783"/>
        <dbReference type="ChEBI" id="CHEBI:58349"/>
        <dbReference type="EC" id="1.8.1.9"/>
    </reaction>
</comment>
<comment type="subcellular location">
    <subcellularLocation>
        <location evidence="3">Endoplasmic reticulum membrane</location>
        <topology evidence="4">Single-pass membrane protein</topology>
    </subcellularLocation>
</comment>
<comment type="PTM">
    <text evidence="1">May contain a selenide-sulfide bond between Cys-51 and Sec-54. This bond is speculated to serve as redox-active pair (By similarity).</text>
</comment>
<comment type="similarity">
    <text evidence="5">Belongs to the SelWTH family. Selenoprotein T subfamily.</text>
</comment>
<comment type="sequence caution" evidence="5">
    <conflict type="erroneous initiation">
        <sequence resource="EMBL-CDS" id="AAH59764"/>
    </conflict>
    <text>Truncated N-terminus.</text>
</comment>
<comment type="sequence caution" evidence="5">
    <conflict type="erroneous initiation">
        <sequence resource="EMBL-CDS" id="CAJ82619"/>
    </conflict>
    <text>Truncated N-terminus.</text>
</comment>
<dbReference type="EC" id="1.8.1.9" evidence="3"/>
<dbReference type="EMBL" id="CR760355">
    <property type="protein sequence ID" value="CAJ82619.1"/>
    <property type="status" value="ALT_INIT"/>
    <property type="molecule type" value="mRNA"/>
</dbReference>
<dbReference type="EMBL" id="CR855814">
    <property type="protein sequence ID" value="CAJ82896.1"/>
    <property type="molecule type" value="mRNA"/>
</dbReference>
<dbReference type="EMBL" id="BC059764">
    <property type="protein sequence ID" value="AAH59764.1"/>
    <property type="status" value="ALT_INIT"/>
    <property type="molecule type" value="mRNA"/>
</dbReference>
<dbReference type="RefSeq" id="NP_988868.2">
    <property type="nucleotide sequence ID" value="NM_203537.3"/>
</dbReference>
<dbReference type="FunCoup" id="Q6PBD1">
    <property type="interactions" value="1656"/>
</dbReference>
<dbReference type="STRING" id="8364.ENSXETP00000044559"/>
<dbReference type="PaxDb" id="8364-ENSXETP00000060967"/>
<dbReference type="DNASU" id="394463"/>
<dbReference type="GeneID" id="394463"/>
<dbReference type="KEGG" id="xtr:394463"/>
<dbReference type="AGR" id="Xenbase:XB-GENE-5780991"/>
<dbReference type="CTD" id="51714"/>
<dbReference type="Xenbase" id="XB-GENE-5780991">
    <property type="gene designation" value="selenot"/>
</dbReference>
<dbReference type="eggNOG" id="KOG3286">
    <property type="taxonomic scope" value="Eukaryota"/>
</dbReference>
<dbReference type="HOGENOM" id="CLU_113870_2_0_1"/>
<dbReference type="InParanoid" id="Q6PBD1"/>
<dbReference type="OMA" id="LKFQICC"/>
<dbReference type="OrthoDB" id="60822at2759"/>
<dbReference type="PhylomeDB" id="Q6PBD1"/>
<dbReference type="Proteomes" id="UP000008143">
    <property type="component" value="Chromosome 5"/>
</dbReference>
<dbReference type="Bgee" id="ENSXETG00000020094">
    <property type="expression patterns" value="Expressed in embryo and 27 other cell types or tissues"/>
</dbReference>
<dbReference type="GO" id="GO:0005783">
    <property type="term" value="C:endoplasmic reticulum"/>
    <property type="evidence" value="ECO:0000250"/>
    <property type="project" value="UniProtKB"/>
</dbReference>
<dbReference type="GO" id="GO:0005789">
    <property type="term" value="C:endoplasmic reticulum membrane"/>
    <property type="evidence" value="ECO:0000250"/>
    <property type="project" value="UniProtKB"/>
</dbReference>
<dbReference type="GO" id="GO:0004791">
    <property type="term" value="F:thioredoxin-disulfide reductase (NADPH) activity"/>
    <property type="evidence" value="ECO:0000250"/>
    <property type="project" value="UniProtKB"/>
</dbReference>
<dbReference type="GO" id="GO:0045454">
    <property type="term" value="P:cell redox homeostasis"/>
    <property type="evidence" value="ECO:0000250"/>
    <property type="project" value="UniProtKB"/>
</dbReference>
<dbReference type="GO" id="GO:0098869">
    <property type="term" value="P:cellular oxidant detoxification"/>
    <property type="evidence" value="ECO:0000250"/>
    <property type="project" value="UniProtKB"/>
</dbReference>
<dbReference type="GO" id="GO:0042593">
    <property type="term" value="P:glucose homeostasis"/>
    <property type="evidence" value="ECO:0000250"/>
    <property type="project" value="UniProtKB"/>
</dbReference>
<dbReference type="GO" id="GO:0035773">
    <property type="term" value="P:insulin secretion involved in cellular response to glucose stimulus"/>
    <property type="evidence" value="ECO:0000250"/>
    <property type="project" value="UniProtKB"/>
</dbReference>
<dbReference type="GO" id="GO:0031016">
    <property type="term" value="P:pancreas development"/>
    <property type="evidence" value="ECO:0000250"/>
    <property type="project" value="UniProtKB"/>
</dbReference>
<dbReference type="GO" id="GO:0007204">
    <property type="term" value="P:positive regulation of cytosolic calcium ion concentration"/>
    <property type="evidence" value="ECO:0000250"/>
    <property type="project" value="UniProtKB"/>
</dbReference>
<dbReference type="GO" id="GO:0060124">
    <property type="term" value="P:positive regulation of growth hormone secretion"/>
    <property type="evidence" value="ECO:0000250"/>
    <property type="project" value="UniProtKB"/>
</dbReference>
<dbReference type="GO" id="GO:0009749">
    <property type="term" value="P:response to glucose"/>
    <property type="evidence" value="ECO:0000250"/>
    <property type="project" value="UniProtKB"/>
</dbReference>
<dbReference type="FunFam" id="3.40.30.10:FF:000085">
    <property type="entry name" value="Selenoprotein T"/>
    <property type="match status" value="1"/>
</dbReference>
<dbReference type="Gene3D" id="3.40.30.10">
    <property type="entry name" value="Glutaredoxin"/>
    <property type="match status" value="1"/>
</dbReference>
<dbReference type="InterPro" id="IPR011893">
    <property type="entry name" value="Selenoprotein_Rdx-typ"/>
</dbReference>
<dbReference type="InterPro" id="IPR019389">
    <property type="entry name" value="Selenoprotein_T"/>
</dbReference>
<dbReference type="InterPro" id="IPR036249">
    <property type="entry name" value="Thioredoxin-like_sf"/>
</dbReference>
<dbReference type="NCBIfam" id="TIGR02174">
    <property type="entry name" value="CXXU_selWTH"/>
    <property type="match status" value="1"/>
</dbReference>
<dbReference type="PANTHER" id="PTHR13544">
    <property type="entry name" value="SELENOPROTEIN T"/>
    <property type="match status" value="1"/>
</dbReference>
<dbReference type="PANTHER" id="PTHR13544:SF0">
    <property type="entry name" value="THIOREDOXIN REDUCTASE-LIKE SELENOPROTEIN T"/>
    <property type="match status" value="1"/>
</dbReference>
<dbReference type="Pfam" id="PF10262">
    <property type="entry name" value="Rdx"/>
    <property type="match status" value="1"/>
</dbReference>
<dbReference type="SUPFAM" id="SSF52833">
    <property type="entry name" value="Thioredoxin-like"/>
    <property type="match status" value="1"/>
</dbReference>
<organism>
    <name type="scientific">Xenopus tropicalis</name>
    <name type="common">Western clawed frog</name>
    <name type="synonym">Silurana tropicalis</name>
    <dbReference type="NCBI Taxonomy" id="8364"/>
    <lineage>
        <taxon>Eukaryota</taxon>
        <taxon>Metazoa</taxon>
        <taxon>Chordata</taxon>
        <taxon>Craniata</taxon>
        <taxon>Vertebrata</taxon>
        <taxon>Euteleostomi</taxon>
        <taxon>Amphibia</taxon>
        <taxon>Batrachia</taxon>
        <taxon>Anura</taxon>
        <taxon>Pipoidea</taxon>
        <taxon>Pipidae</taxon>
        <taxon>Xenopodinae</taxon>
        <taxon>Xenopus</taxon>
        <taxon>Silurana</taxon>
    </lineage>
</organism>
<feature type="signal peptide" evidence="4">
    <location>
        <begin position="1"/>
        <end position="26"/>
    </location>
</feature>
<feature type="chain" id="PRO_0000252044" description="Thioredoxin reductase-like selenoprotein T" evidence="4">
    <location>
        <begin position="27"/>
        <end position="201"/>
    </location>
</feature>
<feature type="transmembrane region" description="Helical" evidence="4">
    <location>
        <begin position="96"/>
        <end position="116"/>
    </location>
</feature>
<feature type="non-standard amino acid" description="Selenocysteine" evidence="4">
    <location>
        <position position="54"/>
    </location>
</feature>
<feature type="cross-link" description="Cysteinyl-selenocysteine (Cys-Sec)" evidence="4">
    <location>
        <begin position="51"/>
        <end position="54"/>
    </location>
</feature>
<feature type="sequence conflict" description="In Ref. 1; CAJ82896." evidence="5" ref="1">
    <original>M</original>
    <variation>N</variation>
    <location>
        <position position="143"/>
    </location>
</feature>
<accession>Q6PBD1</accession>
<accession>Q28CY0</accession>
<keyword id="KW-0256">Endoplasmic reticulum</keyword>
<keyword id="KW-0472">Membrane</keyword>
<keyword id="KW-0521">NADP</keyword>
<keyword id="KW-0560">Oxidoreductase</keyword>
<keyword id="KW-0676">Redox-active center</keyword>
<keyword id="KW-1185">Reference proteome</keyword>
<keyword id="KW-0712">Selenocysteine</keyword>
<keyword id="KW-0732">Signal</keyword>
<keyword id="KW-0812">Transmembrane</keyword>
<keyword id="KW-1133">Transmembrane helix</keyword>
<reference evidence="5 7" key="1">
    <citation type="submission" date="2006-06" db="EMBL/GenBank/DDBJ databases">
        <authorList>
            <consortium name="Sanger Xenopus tropicalis EST/cDNA project"/>
        </authorList>
    </citation>
    <scope>NUCLEOTIDE SEQUENCE [LARGE SCALE MRNA]</scope>
    <source>
        <tissue>Neurula</tissue>
        <tissue>Tadpole</tissue>
    </source>
</reference>
<reference evidence="5 7" key="2">
    <citation type="submission" date="2003-10" db="EMBL/GenBank/DDBJ databases">
        <authorList>
            <consortium name="NIH - Xenopus Gene Collection (XGC) project"/>
        </authorList>
    </citation>
    <scope>NUCLEOTIDE SEQUENCE [LARGE SCALE MRNA] OF 3-201</scope>
    <source>
        <tissue evidence="6">Embryo</tissue>
    </source>
</reference>
<gene>
    <name type="primary">selenot</name>
    <name evidence="6" type="synonym">selt</name>
    <name evidence="7" type="ORF">TNeu015n05.1</name>
    <name evidence="8" type="ORF">TTpA003b03.1</name>
</gene>